<proteinExistence type="inferred from homology"/>
<dbReference type="EMBL" id="CP000388">
    <property type="protein sequence ID" value="ABG40639.1"/>
    <property type="molecule type" value="Genomic_DNA"/>
</dbReference>
<dbReference type="RefSeq" id="WP_006993870.1">
    <property type="nucleotide sequence ID" value="NC_008228.1"/>
</dbReference>
<dbReference type="SMR" id="Q15TZ9"/>
<dbReference type="STRING" id="342610.Patl_2121"/>
<dbReference type="KEGG" id="pat:Patl_2121"/>
<dbReference type="eggNOG" id="COG0236">
    <property type="taxonomic scope" value="Bacteria"/>
</dbReference>
<dbReference type="HOGENOM" id="CLU_108696_5_1_6"/>
<dbReference type="OrthoDB" id="9804551at2"/>
<dbReference type="UniPathway" id="UPA00094"/>
<dbReference type="Proteomes" id="UP000001981">
    <property type="component" value="Chromosome"/>
</dbReference>
<dbReference type="GO" id="GO:0005829">
    <property type="term" value="C:cytosol"/>
    <property type="evidence" value="ECO:0007669"/>
    <property type="project" value="TreeGrafter"/>
</dbReference>
<dbReference type="GO" id="GO:0016020">
    <property type="term" value="C:membrane"/>
    <property type="evidence" value="ECO:0007669"/>
    <property type="project" value="GOC"/>
</dbReference>
<dbReference type="GO" id="GO:0000035">
    <property type="term" value="F:acyl binding"/>
    <property type="evidence" value="ECO:0007669"/>
    <property type="project" value="TreeGrafter"/>
</dbReference>
<dbReference type="GO" id="GO:0000036">
    <property type="term" value="F:acyl carrier activity"/>
    <property type="evidence" value="ECO:0007669"/>
    <property type="project" value="UniProtKB-UniRule"/>
</dbReference>
<dbReference type="GO" id="GO:0009245">
    <property type="term" value="P:lipid A biosynthetic process"/>
    <property type="evidence" value="ECO:0007669"/>
    <property type="project" value="TreeGrafter"/>
</dbReference>
<dbReference type="FunFam" id="1.10.1200.10:FF:000001">
    <property type="entry name" value="Acyl carrier protein"/>
    <property type="match status" value="1"/>
</dbReference>
<dbReference type="Gene3D" id="1.10.1200.10">
    <property type="entry name" value="ACP-like"/>
    <property type="match status" value="1"/>
</dbReference>
<dbReference type="HAMAP" id="MF_01217">
    <property type="entry name" value="Acyl_carrier"/>
    <property type="match status" value="1"/>
</dbReference>
<dbReference type="InterPro" id="IPR003231">
    <property type="entry name" value="ACP"/>
</dbReference>
<dbReference type="InterPro" id="IPR036736">
    <property type="entry name" value="ACP-like_sf"/>
</dbReference>
<dbReference type="InterPro" id="IPR009081">
    <property type="entry name" value="PP-bd_ACP"/>
</dbReference>
<dbReference type="InterPro" id="IPR006162">
    <property type="entry name" value="Ppantetheine_attach_site"/>
</dbReference>
<dbReference type="NCBIfam" id="TIGR00517">
    <property type="entry name" value="acyl_carrier"/>
    <property type="match status" value="1"/>
</dbReference>
<dbReference type="NCBIfam" id="NF002148">
    <property type="entry name" value="PRK00982.1-2"/>
    <property type="match status" value="1"/>
</dbReference>
<dbReference type="NCBIfam" id="NF002149">
    <property type="entry name" value="PRK00982.1-3"/>
    <property type="match status" value="1"/>
</dbReference>
<dbReference type="NCBIfam" id="NF002150">
    <property type="entry name" value="PRK00982.1-4"/>
    <property type="match status" value="1"/>
</dbReference>
<dbReference type="NCBIfam" id="NF002151">
    <property type="entry name" value="PRK00982.1-5"/>
    <property type="match status" value="1"/>
</dbReference>
<dbReference type="PANTHER" id="PTHR20863">
    <property type="entry name" value="ACYL CARRIER PROTEIN"/>
    <property type="match status" value="1"/>
</dbReference>
<dbReference type="PANTHER" id="PTHR20863:SF76">
    <property type="entry name" value="CARRIER DOMAIN-CONTAINING PROTEIN"/>
    <property type="match status" value="1"/>
</dbReference>
<dbReference type="Pfam" id="PF00550">
    <property type="entry name" value="PP-binding"/>
    <property type="match status" value="1"/>
</dbReference>
<dbReference type="SUPFAM" id="SSF47336">
    <property type="entry name" value="ACP-like"/>
    <property type="match status" value="1"/>
</dbReference>
<dbReference type="PROSITE" id="PS50075">
    <property type="entry name" value="CARRIER"/>
    <property type="match status" value="1"/>
</dbReference>
<dbReference type="PROSITE" id="PS00012">
    <property type="entry name" value="PHOSPHOPANTETHEINE"/>
    <property type="match status" value="1"/>
</dbReference>
<reference key="1">
    <citation type="submission" date="2006-06" db="EMBL/GenBank/DDBJ databases">
        <title>Complete sequence of Pseudoalteromonas atlantica T6c.</title>
        <authorList>
            <consortium name="US DOE Joint Genome Institute"/>
            <person name="Copeland A."/>
            <person name="Lucas S."/>
            <person name="Lapidus A."/>
            <person name="Barry K."/>
            <person name="Detter J.C."/>
            <person name="Glavina del Rio T."/>
            <person name="Hammon N."/>
            <person name="Israni S."/>
            <person name="Dalin E."/>
            <person name="Tice H."/>
            <person name="Pitluck S."/>
            <person name="Saunders E."/>
            <person name="Brettin T."/>
            <person name="Bruce D."/>
            <person name="Han C."/>
            <person name="Tapia R."/>
            <person name="Gilna P."/>
            <person name="Schmutz J."/>
            <person name="Larimer F."/>
            <person name="Land M."/>
            <person name="Hauser L."/>
            <person name="Kyrpides N."/>
            <person name="Kim E."/>
            <person name="Karls A.C."/>
            <person name="Bartlett D."/>
            <person name="Higgins B.P."/>
            <person name="Richardson P."/>
        </authorList>
    </citation>
    <scope>NUCLEOTIDE SEQUENCE [LARGE SCALE GENOMIC DNA]</scope>
    <source>
        <strain>T6c / ATCC BAA-1087</strain>
    </source>
</reference>
<sequence>MSDIEERVKKIIIEQLGVKEEEVKSEASFVDDLGADSLDTVELVMALEEEFDTEIPDEEAEKITTVQSAIDYVNAHKDA</sequence>
<gene>
    <name evidence="1" type="primary">acpP</name>
    <name type="ordered locus">Patl_2121</name>
</gene>
<feature type="chain" id="PRO_1000066659" description="Acyl carrier protein">
    <location>
        <begin position="1"/>
        <end position="79"/>
    </location>
</feature>
<feature type="domain" description="Carrier" evidence="2">
    <location>
        <begin position="2"/>
        <end position="77"/>
    </location>
</feature>
<feature type="modified residue" description="O-(pantetheine 4'-phosphoryl)serine" evidence="2">
    <location>
        <position position="37"/>
    </location>
</feature>
<comment type="function">
    <text evidence="1">Carrier of the growing fatty acid chain in fatty acid biosynthesis.</text>
</comment>
<comment type="pathway">
    <text evidence="1">Lipid metabolism; fatty acid biosynthesis.</text>
</comment>
<comment type="subcellular location">
    <subcellularLocation>
        <location evidence="1">Cytoplasm</location>
    </subcellularLocation>
</comment>
<comment type="PTM">
    <text evidence="1">4'-phosphopantetheine is transferred from CoA to a specific serine of apo-ACP by AcpS. This modification is essential for activity because fatty acids are bound in thioester linkage to the sulfhydryl of the prosthetic group.</text>
</comment>
<comment type="similarity">
    <text evidence="1">Belongs to the acyl carrier protein (ACP) family.</text>
</comment>
<accession>Q15TZ9</accession>
<name>ACP_PSEA6</name>
<evidence type="ECO:0000255" key="1">
    <source>
        <dbReference type="HAMAP-Rule" id="MF_01217"/>
    </source>
</evidence>
<evidence type="ECO:0000255" key="2">
    <source>
        <dbReference type="PROSITE-ProRule" id="PRU00258"/>
    </source>
</evidence>
<keyword id="KW-0963">Cytoplasm</keyword>
<keyword id="KW-0275">Fatty acid biosynthesis</keyword>
<keyword id="KW-0276">Fatty acid metabolism</keyword>
<keyword id="KW-0444">Lipid biosynthesis</keyword>
<keyword id="KW-0443">Lipid metabolism</keyword>
<keyword id="KW-0596">Phosphopantetheine</keyword>
<keyword id="KW-0597">Phosphoprotein</keyword>
<organism>
    <name type="scientific">Pseudoalteromonas atlantica (strain T6c / ATCC BAA-1087)</name>
    <dbReference type="NCBI Taxonomy" id="3042615"/>
    <lineage>
        <taxon>Bacteria</taxon>
        <taxon>Pseudomonadati</taxon>
        <taxon>Pseudomonadota</taxon>
        <taxon>Gammaproteobacteria</taxon>
        <taxon>Alteromonadales</taxon>
        <taxon>Alteromonadaceae</taxon>
        <taxon>Paraglaciecola</taxon>
    </lineage>
</organism>
<protein>
    <recommendedName>
        <fullName evidence="1">Acyl carrier protein</fullName>
        <shortName evidence="1">ACP</shortName>
    </recommendedName>
</protein>